<gene>
    <name evidence="1" type="primary">ctaB</name>
    <name type="ordered locus">MSMEG_3105</name>
    <name type="ordered locus">MSMEI_3026</name>
</gene>
<protein>
    <recommendedName>
        <fullName evidence="1">Protoheme IX farnesyltransferase</fullName>
        <ecNumber evidence="1">2.5.1.141</ecNumber>
    </recommendedName>
    <alternativeName>
        <fullName evidence="1">Heme B farnesyltransferase</fullName>
    </alternativeName>
    <alternativeName>
        <fullName evidence="1">Heme O synthase</fullName>
    </alternativeName>
</protein>
<feature type="chain" id="PRO_0000327086" description="Protoheme IX farnesyltransferase">
    <location>
        <begin position="1"/>
        <end position="308"/>
    </location>
</feature>
<feature type="transmembrane region" description="Helical" evidence="1">
    <location>
        <begin position="31"/>
        <end position="51"/>
    </location>
</feature>
<feature type="transmembrane region" description="Helical" evidence="1">
    <location>
        <begin position="53"/>
        <end position="73"/>
    </location>
</feature>
<feature type="transmembrane region" description="Helical" evidence="1">
    <location>
        <begin position="102"/>
        <end position="122"/>
    </location>
</feature>
<feature type="transmembrane region" description="Helical" evidence="1">
    <location>
        <begin position="124"/>
        <end position="144"/>
    </location>
</feature>
<feature type="transmembrane region" description="Helical" evidence="1">
    <location>
        <begin position="149"/>
        <end position="169"/>
    </location>
</feature>
<feature type="transmembrane region" description="Helical" evidence="1">
    <location>
        <begin position="170"/>
        <end position="190"/>
    </location>
</feature>
<feature type="transmembrane region" description="Helical" evidence="1">
    <location>
        <begin position="242"/>
        <end position="262"/>
    </location>
</feature>
<feature type="transmembrane region" description="Helical" evidence="1">
    <location>
        <begin position="288"/>
        <end position="308"/>
    </location>
</feature>
<proteinExistence type="inferred from homology"/>
<reference key="1">
    <citation type="submission" date="2006-10" db="EMBL/GenBank/DDBJ databases">
        <authorList>
            <person name="Fleischmann R.D."/>
            <person name="Dodson R.J."/>
            <person name="Haft D.H."/>
            <person name="Merkel J.S."/>
            <person name="Nelson W.C."/>
            <person name="Fraser C.M."/>
        </authorList>
    </citation>
    <scope>NUCLEOTIDE SEQUENCE [LARGE SCALE GENOMIC DNA]</scope>
    <source>
        <strain>ATCC 700084 / mc(2)155</strain>
    </source>
</reference>
<reference key="2">
    <citation type="journal article" date="2007" name="Genome Biol.">
        <title>Interrupted coding sequences in Mycobacterium smegmatis: authentic mutations or sequencing errors?</title>
        <authorList>
            <person name="Deshayes C."/>
            <person name="Perrodou E."/>
            <person name="Gallien S."/>
            <person name="Euphrasie D."/>
            <person name="Schaeffer C."/>
            <person name="Van-Dorsselaer A."/>
            <person name="Poch O."/>
            <person name="Lecompte O."/>
            <person name="Reyrat J.-M."/>
        </authorList>
    </citation>
    <scope>NUCLEOTIDE SEQUENCE [LARGE SCALE GENOMIC DNA]</scope>
    <source>
        <strain>ATCC 700084 / mc(2)155</strain>
    </source>
</reference>
<reference key="3">
    <citation type="journal article" date="2009" name="Genome Res.">
        <title>Ortho-proteogenomics: multiple proteomes investigation through orthology and a new MS-based protocol.</title>
        <authorList>
            <person name="Gallien S."/>
            <person name="Perrodou E."/>
            <person name="Carapito C."/>
            <person name="Deshayes C."/>
            <person name="Reyrat J.-M."/>
            <person name="Van Dorsselaer A."/>
            <person name="Poch O."/>
            <person name="Schaeffer C."/>
            <person name="Lecompte O."/>
        </authorList>
    </citation>
    <scope>NUCLEOTIDE SEQUENCE [LARGE SCALE GENOMIC DNA]</scope>
    <source>
        <strain>ATCC 700084 / mc(2)155</strain>
    </source>
</reference>
<dbReference type="EC" id="2.5.1.141" evidence="1"/>
<dbReference type="EMBL" id="CP000480">
    <property type="protein sequence ID" value="ABK73711.1"/>
    <property type="molecule type" value="Genomic_DNA"/>
</dbReference>
<dbReference type="EMBL" id="CP001663">
    <property type="protein sequence ID" value="AFP39490.1"/>
    <property type="molecule type" value="Genomic_DNA"/>
</dbReference>
<dbReference type="RefSeq" id="WP_003894492.1">
    <property type="nucleotide sequence ID" value="NZ_SIJM01000002.1"/>
</dbReference>
<dbReference type="RefSeq" id="YP_887420.1">
    <property type="nucleotide sequence ID" value="NC_008596.1"/>
</dbReference>
<dbReference type="SMR" id="A0QWY2"/>
<dbReference type="STRING" id="246196.MSMEG_3105"/>
<dbReference type="PaxDb" id="246196-MSMEI_3026"/>
<dbReference type="KEGG" id="msb:LJ00_15445"/>
<dbReference type="KEGG" id="msg:MSMEI_3026"/>
<dbReference type="KEGG" id="msm:MSMEG_3105"/>
<dbReference type="PATRIC" id="fig|246196.19.peg.3066"/>
<dbReference type="eggNOG" id="COG0109">
    <property type="taxonomic scope" value="Bacteria"/>
</dbReference>
<dbReference type="OrthoDB" id="9814417at2"/>
<dbReference type="UniPathway" id="UPA00834">
    <property type="reaction ID" value="UER00712"/>
</dbReference>
<dbReference type="Proteomes" id="UP000000757">
    <property type="component" value="Chromosome"/>
</dbReference>
<dbReference type="Proteomes" id="UP000006158">
    <property type="component" value="Chromosome"/>
</dbReference>
<dbReference type="GO" id="GO:0005886">
    <property type="term" value="C:plasma membrane"/>
    <property type="evidence" value="ECO:0007669"/>
    <property type="project" value="UniProtKB-SubCell"/>
</dbReference>
<dbReference type="GO" id="GO:0008495">
    <property type="term" value="F:protoheme IX farnesyltransferase activity"/>
    <property type="evidence" value="ECO:0007669"/>
    <property type="project" value="UniProtKB-UniRule"/>
</dbReference>
<dbReference type="GO" id="GO:0048034">
    <property type="term" value="P:heme O biosynthetic process"/>
    <property type="evidence" value="ECO:0007669"/>
    <property type="project" value="UniProtKB-UniRule"/>
</dbReference>
<dbReference type="CDD" id="cd13957">
    <property type="entry name" value="PT_UbiA_Cox10"/>
    <property type="match status" value="1"/>
</dbReference>
<dbReference type="FunFam" id="1.10.357.140:FF:000001">
    <property type="entry name" value="Protoheme IX farnesyltransferase"/>
    <property type="match status" value="1"/>
</dbReference>
<dbReference type="Gene3D" id="1.10.357.140">
    <property type="entry name" value="UbiA prenyltransferase"/>
    <property type="match status" value="1"/>
</dbReference>
<dbReference type="HAMAP" id="MF_00154">
    <property type="entry name" value="CyoE_CtaB"/>
    <property type="match status" value="1"/>
</dbReference>
<dbReference type="InterPro" id="IPR006369">
    <property type="entry name" value="Protohaem_IX_farnesylTrfase"/>
</dbReference>
<dbReference type="InterPro" id="IPR000537">
    <property type="entry name" value="UbiA_prenyltransferase"/>
</dbReference>
<dbReference type="InterPro" id="IPR044878">
    <property type="entry name" value="UbiA_sf"/>
</dbReference>
<dbReference type="NCBIfam" id="TIGR01473">
    <property type="entry name" value="cyoE_ctaB"/>
    <property type="match status" value="1"/>
</dbReference>
<dbReference type="NCBIfam" id="NF003349">
    <property type="entry name" value="PRK04375.1-2"/>
    <property type="match status" value="1"/>
</dbReference>
<dbReference type="PANTHER" id="PTHR43448:SF7">
    <property type="entry name" value="4-HYDROXYBENZOATE SOLANESYLTRANSFERASE"/>
    <property type="match status" value="1"/>
</dbReference>
<dbReference type="PANTHER" id="PTHR43448">
    <property type="entry name" value="PROTOHEME IX FARNESYLTRANSFERASE, MITOCHONDRIAL"/>
    <property type="match status" value="1"/>
</dbReference>
<dbReference type="Pfam" id="PF01040">
    <property type="entry name" value="UbiA"/>
    <property type="match status" value="1"/>
</dbReference>
<organism>
    <name type="scientific">Mycolicibacterium smegmatis (strain ATCC 700084 / mc(2)155)</name>
    <name type="common">Mycobacterium smegmatis</name>
    <dbReference type="NCBI Taxonomy" id="246196"/>
    <lineage>
        <taxon>Bacteria</taxon>
        <taxon>Bacillati</taxon>
        <taxon>Actinomycetota</taxon>
        <taxon>Actinomycetes</taxon>
        <taxon>Mycobacteriales</taxon>
        <taxon>Mycobacteriaceae</taxon>
        <taxon>Mycolicibacterium</taxon>
    </lineage>
</organism>
<name>COXX_MYCS2</name>
<comment type="function">
    <text evidence="1">Converts heme B (protoheme IX) to heme O by substitution of the vinyl group on carbon 2 of heme B porphyrin ring with a hydroxyethyl farnesyl side group.</text>
</comment>
<comment type="catalytic activity">
    <reaction evidence="1">
        <text>heme b + (2E,6E)-farnesyl diphosphate + H2O = Fe(II)-heme o + diphosphate</text>
        <dbReference type="Rhea" id="RHEA:28070"/>
        <dbReference type="ChEBI" id="CHEBI:15377"/>
        <dbReference type="ChEBI" id="CHEBI:33019"/>
        <dbReference type="ChEBI" id="CHEBI:60344"/>
        <dbReference type="ChEBI" id="CHEBI:60530"/>
        <dbReference type="ChEBI" id="CHEBI:175763"/>
        <dbReference type="EC" id="2.5.1.141"/>
    </reaction>
</comment>
<comment type="pathway">
    <text evidence="1">Porphyrin-containing compound metabolism; heme O biosynthesis; heme O from protoheme: step 1/1.</text>
</comment>
<comment type="subcellular location">
    <subcellularLocation>
        <location evidence="1">Cell membrane</location>
        <topology evidence="1">Multi-pass membrane protein</topology>
    </subcellularLocation>
</comment>
<comment type="miscellaneous">
    <text evidence="1">Carbon 2 of the heme B porphyrin ring is defined according to the Fischer nomenclature.</text>
</comment>
<comment type="similarity">
    <text evidence="1">Belongs to the UbiA prenyltransferase family. Protoheme IX farnesyltransferase subfamily.</text>
</comment>
<evidence type="ECO:0000255" key="1">
    <source>
        <dbReference type="HAMAP-Rule" id="MF_00154"/>
    </source>
</evidence>
<keyword id="KW-1003">Cell membrane</keyword>
<keyword id="KW-0350">Heme biosynthesis</keyword>
<keyword id="KW-0472">Membrane</keyword>
<keyword id="KW-1185">Reference proteome</keyword>
<keyword id="KW-0808">Transferase</keyword>
<keyword id="KW-0812">Transmembrane</keyword>
<keyword id="KW-1133">Transmembrane helix</keyword>
<sequence>MSIRERRLISWTPRRIRTTFLAYLALTKPRVIELLLVTTIPAMLLADRGTVDPLLILNTLVGGMLAAAGANTLNCVADADIDKVMKRTARRPLARATVPTRHALIFGLVLTVTSFCWLWLSTNLLSGLLAVATIAFYVFVYTMLLKRRTSQNVVWGGAAGCMPVMIGWSAVTGTIQWPALVMFLIIFFWTPPHTWALAMRYKDDYKAAGVPMLPAVATERQVTRQILIYTWLTVLTTLVLALATGWLYGAVALLAGAWFLVMAHQLYSGVKRGEPVKPLRLFLQSNNYLAVVFCALAIDSALALPTLL</sequence>
<accession>A0QWY2</accession>
<accession>I7FDA5</accession>